<keyword id="KW-0963">Cytoplasm</keyword>
<keyword id="KW-0271">Exosome</keyword>
<keyword id="KW-0539">Nucleus</keyword>
<keyword id="KW-1185">Reference proteome</keyword>
<keyword id="KW-0694">RNA-binding</keyword>
<keyword id="KW-0698">rRNA processing</keyword>
<name>RRP45_SCHPO</name>
<evidence type="ECO:0000250" key="1">
    <source>
        <dbReference type="UniProtKB" id="Q05636"/>
    </source>
</evidence>
<evidence type="ECO:0000269" key="2">
    <source>
    </source>
</evidence>
<evidence type="ECO:0000305" key="3"/>
<accession>O74918</accession>
<reference key="1">
    <citation type="journal article" date="2002" name="Nature">
        <title>The genome sequence of Schizosaccharomyces pombe.</title>
        <authorList>
            <person name="Wood V."/>
            <person name="Gwilliam R."/>
            <person name="Rajandream M.A."/>
            <person name="Lyne M.H."/>
            <person name="Lyne R."/>
            <person name="Stewart A."/>
            <person name="Sgouros J.G."/>
            <person name="Peat N."/>
            <person name="Hayles J."/>
            <person name="Baker S.G."/>
            <person name="Basham D."/>
            <person name="Bowman S."/>
            <person name="Brooks K."/>
            <person name="Brown D."/>
            <person name="Brown S."/>
            <person name="Chillingworth T."/>
            <person name="Churcher C.M."/>
            <person name="Collins M."/>
            <person name="Connor R."/>
            <person name="Cronin A."/>
            <person name="Davis P."/>
            <person name="Feltwell T."/>
            <person name="Fraser A."/>
            <person name="Gentles S."/>
            <person name="Goble A."/>
            <person name="Hamlin N."/>
            <person name="Harris D.E."/>
            <person name="Hidalgo J."/>
            <person name="Hodgson G."/>
            <person name="Holroyd S."/>
            <person name="Hornsby T."/>
            <person name="Howarth S."/>
            <person name="Huckle E.J."/>
            <person name="Hunt S."/>
            <person name="Jagels K."/>
            <person name="James K.D."/>
            <person name="Jones L."/>
            <person name="Jones M."/>
            <person name="Leather S."/>
            <person name="McDonald S."/>
            <person name="McLean J."/>
            <person name="Mooney P."/>
            <person name="Moule S."/>
            <person name="Mungall K.L."/>
            <person name="Murphy L.D."/>
            <person name="Niblett D."/>
            <person name="Odell C."/>
            <person name="Oliver K."/>
            <person name="O'Neil S."/>
            <person name="Pearson D."/>
            <person name="Quail M.A."/>
            <person name="Rabbinowitsch E."/>
            <person name="Rutherford K.M."/>
            <person name="Rutter S."/>
            <person name="Saunders D."/>
            <person name="Seeger K."/>
            <person name="Sharp S."/>
            <person name="Skelton J."/>
            <person name="Simmonds M.N."/>
            <person name="Squares R."/>
            <person name="Squares S."/>
            <person name="Stevens K."/>
            <person name="Taylor K."/>
            <person name="Taylor R.G."/>
            <person name="Tivey A."/>
            <person name="Walsh S.V."/>
            <person name="Warren T."/>
            <person name="Whitehead S."/>
            <person name="Woodward J.R."/>
            <person name="Volckaert G."/>
            <person name="Aert R."/>
            <person name="Robben J."/>
            <person name="Grymonprez B."/>
            <person name="Weltjens I."/>
            <person name="Vanstreels E."/>
            <person name="Rieger M."/>
            <person name="Schaefer M."/>
            <person name="Mueller-Auer S."/>
            <person name="Gabel C."/>
            <person name="Fuchs M."/>
            <person name="Duesterhoeft A."/>
            <person name="Fritzc C."/>
            <person name="Holzer E."/>
            <person name="Moestl D."/>
            <person name="Hilbert H."/>
            <person name="Borzym K."/>
            <person name="Langer I."/>
            <person name="Beck A."/>
            <person name="Lehrach H."/>
            <person name="Reinhardt R."/>
            <person name="Pohl T.M."/>
            <person name="Eger P."/>
            <person name="Zimmermann W."/>
            <person name="Wedler H."/>
            <person name="Wambutt R."/>
            <person name="Purnelle B."/>
            <person name="Goffeau A."/>
            <person name="Cadieu E."/>
            <person name="Dreano S."/>
            <person name="Gloux S."/>
            <person name="Lelaure V."/>
            <person name="Mottier S."/>
            <person name="Galibert F."/>
            <person name="Aves S.J."/>
            <person name="Xiang Z."/>
            <person name="Hunt C."/>
            <person name="Moore K."/>
            <person name="Hurst S.M."/>
            <person name="Lucas M."/>
            <person name="Rochet M."/>
            <person name="Gaillardin C."/>
            <person name="Tallada V.A."/>
            <person name="Garzon A."/>
            <person name="Thode G."/>
            <person name="Daga R.R."/>
            <person name="Cruzado L."/>
            <person name="Jimenez J."/>
            <person name="Sanchez M."/>
            <person name="del Rey F."/>
            <person name="Benito J."/>
            <person name="Dominguez A."/>
            <person name="Revuelta J.L."/>
            <person name="Moreno S."/>
            <person name="Armstrong J."/>
            <person name="Forsburg S.L."/>
            <person name="Cerutti L."/>
            <person name="Lowe T."/>
            <person name="McCombie W.R."/>
            <person name="Paulsen I."/>
            <person name="Potashkin J."/>
            <person name="Shpakovski G.V."/>
            <person name="Ussery D."/>
            <person name="Barrell B.G."/>
            <person name="Nurse P."/>
        </authorList>
    </citation>
    <scope>NUCLEOTIDE SEQUENCE [LARGE SCALE GENOMIC DNA]</scope>
    <source>
        <strain>972 / ATCC 24843</strain>
    </source>
</reference>
<reference key="2">
    <citation type="journal article" date="2006" name="Nat. Biotechnol.">
        <title>ORFeome cloning and global analysis of protein localization in the fission yeast Schizosaccharomyces pombe.</title>
        <authorList>
            <person name="Matsuyama A."/>
            <person name="Arai R."/>
            <person name="Yashiroda Y."/>
            <person name="Shirai A."/>
            <person name="Kamata A."/>
            <person name="Sekido S."/>
            <person name="Kobayashi Y."/>
            <person name="Hashimoto A."/>
            <person name="Hamamoto M."/>
            <person name="Hiraoka Y."/>
            <person name="Horinouchi S."/>
            <person name="Yoshida M."/>
        </authorList>
    </citation>
    <scope>SUBCELLULAR LOCATION [LARGE SCALE ANALYSIS]</scope>
</reference>
<sequence>MSRHLETSLNNKEFVLNSLEKGLRLDGRQLSDFRSLEIQFGKEYGQVDVSFGHTRVMARITTEITKPYTDRPFDGIFSITTELTPLAYSAFEAGRVSDQEIVISRLIEKAVRRSNALDTESLCIISGQKCWHVRASVHFINHDGNLVDAACIAVIAALCHFRRPELTVVGEEVTVHPVEERVPVPLSILHMPICVTFSFFNNGELAIVDATLEEEDLCNGSMTITLNKNREVCQIYKAGGIIIDPSKIISCAKTAFDIAVSVCSVIQQALDEDLRKKETQYLGGSAENERS</sequence>
<proteinExistence type="inferred from homology"/>
<feature type="chain" id="PRO_0000139973" description="Exosome complex component rrp45">
    <location>
        <begin position="1"/>
        <end position="291"/>
    </location>
</feature>
<gene>
    <name type="primary">rrp45</name>
    <name type="ORF">SPCC757.08</name>
</gene>
<comment type="function">
    <text evidence="1">Non-catalytic component of the RNA exosome complex which has 3'-&gt;5' exoribonuclease activity and participates in a multitude of cellular RNA processing and degradation events. In the nucleus, the RNA exosome complex is involved in proper maturation of stable RNA species such as rRNA, snRNA and snoRNA, in the elimination of RNA processing by-products and non-coding 'pervasive' transcripts, such as antisense RNA species and cryptic unstable transcripts (CUTs), and of mRNAs with processing defects, thereby limiting or excluding their export to the cytoplasm. In the cytoplasm, the RNA exosome complex is involved in general mRNA turnover and in RNA surveillance pathways, preventing translation of aberrant mRNAs. The catalytic inactive RNA exosome core complex of 9 subunits (Exo-9) is proposed to play a pivotal role in the binding and presentation of RNA for ribonucleolysis, and to serve as a scaffold for the association with catalytic subunits and accessory proteins or complexes. ski6 is part of the hexameric ring of RNase PH domain-containing subunits proposed to form a central channel which threads RNA substrates for degradation (By similarity).</text>
</comment>
<comment type="subunit">
    <text evidence="1">Component of the RNA exosome complex. Specifically part of the catalytically inactive RNA exosome core complex (Exo-9) which may associate with the catalytic subunits rrp6 and dis3 in cytoplasmic- and nuclear-specific RNA exosome complex forms. Exo-9 is formed by a hexameric base ring of RNase PH domain-containing subunits and a cap ring consisting of csl4, rrp4 and rrp40.</text>
</comment>
<comment type="subcellular location">
    <subcellularLocation>
        <location evidence="2">Cytoplasm</location>
    </subcellularLocation>
    <subcellularLocation>
        <location evidence="2">Nucleus</location>
        <location evidence="2">Nucleolus</location>
    </subcellularLocation>
</comment>
<comment type="similarity">
    <text evidence="3">Belongs to the RNase PH family.</text>
</comment>
<dbReference type="EMBL" id="CU329672">
    <property type="protein sequence ID" value="CAA21233.1"/>
    <property type="molecule type" value="Genomic_DNA"/>
</dbReference>
<dbReference type="PIR" id="T41599">
    <property type="entry name" value="T41599"/>
</dbReference>
<dbReference type="RefSeq" id="NP_587683.1">
    <property type="nucleotide sequence ID" value="NM_001022678.2"/>
</dbReference>
<dbReference type="SMR" id="O74918"/>
<dbReference type="BioGRID" id="275678">
    <property type="interactions" value="10"/>
</dbReference>
<dbReference type="ComplexPortal" id="CPX-8914">
    <property type="entry name" value="Nucleolar exosome complex"/>
</dbReference>
<dbReference type="FunCoup" id="O74918">
    <property type="interactions" value="711"/>
</dbReference>
<dbReference type="STRING" id="284812.O74918"/>
<dbReference type="iPTMnet" id="O74918"/>
<dbReference type="PaxDb" id="4896-SPCC757.08.1"/>
<dbReference type="EnsemblFungi" id="SPCC757.08.1">
    <property type="protein sequence ID" value="SPCC757.08.1:pep"/>
    <property type="gene ID" value="SPCC757.08"/>
</dbReference>
<dbReference type="PomBase" id="SPCC757.08">
    <property type="gene designation" value="rrp45"/>
</dbReference>
<dbReference type="VEuPathDB" id="FungiDB:SPCC757.08"/>
<dbReference type="eggNOG" id="KOG1614">
    <property type="taxonomic scope" value="Eukaryota"/>
</dbReference>
<dbReference type="HOGENOM" id="CLU_038194_0_0_1"/>
<dbReference type="InParanoid" id="O74918"/>
<dbReference type="OMA" id="GPQFENG"/>
<dbReference type="PhylomeDB" id="O74918"/>
<dbReference type="Reactome" id="R-SPO-429958">
    <property type="pathway name" value="mRNA decay by 3' to 5' exoribonuclease"/>
</dbReference>
<dbReference type="Reactome" id="R-SPO-6791226">
    <property type="pathway name" value="Major pathway of rRNA processing in the nucleolus and cytosol"/>
</dbReference>
<dbReference type="PRO" id="PR:O74918"/>
<dbReference type="Proteomes" id="UP000002485">
    <property type="component" value="Chromosome III"/>
</dbReference>
<dbReference type="GO" id="GO:0000177">
    <property type="term" value="C:cytoplasmic exosome (RNase complex)"/>
    <property type="evidence" value="ECO:0000318"/>
    <property type="project" value="GO_Central"/>
</dbReference>
<dbReference type="GO" id="GO:0005829">
    <property type="term" value="C:cytosol"/>
    <property type="evidence" value="ECO:0007005"/>
    <property type="project" value="PomBase"/>
</dbReference>
<dbReference type="GO" id="GO:0000178">
    <property type="term" value="C:exosome (RNase complex)"/>
    <property type="evidence" value="ECO:0000314"/>
    <property type="project" value="PomBase"/>
</dbReference>
<dbReference type="GO" id="GO:0000176">
    <property type="term" value="C:nuclear exosome (RNase complex)"/>
    <property type="evidence" value="ECO:0000269"/>
    <property type="project" value="PomBase"/>
</dbReference>
<dbReference type="GO" id="GO:0005730">
    <property type="term" value="C:nucleolus"/>
    <property type="evidence" value="ECO:0007669"/>
    <property type="project" value="UniProtKB-SubCell"/>
</dbReference>
<dbReference type="GO" id="GO:0005634">
    <property type="term" value="C:nucleus"/>
    <property type="evidence" value="ECO:0007005"/>
    <property type="project" value="PomBase"/>
</dbReference>
<dbReference type="GO" id="GO:0000175">
    <property type="term" value="F:3'-5'-RNA exonuclease activity"/>
    <property type="evidence" value="ECO:0000266"/>
    <property type="project" value="PomBase"/>
</dbReference>
<dbReference type="GO" id="GO:0035925">
    <property type="term" value="F:mRNA 3'-UTR AU-rich region binding"/>
    <property type="evidence" value="ECO:0000318"/>
    <property type="project" value="GO_Central"/>
</dbReference>
<dbReference type="GO" id="GO:0000467">
    <property type="term" value="P:exonucleolytic trimming to generate mature 3'-end of 5.8S rRNA from tricistronic rRNA transcript (SSU-rRNA, 5.8S rRNA, LSU-rRNA)"/>
    <property type="evidence" value="ECO:0000318"/>
    <property type="project" value="GO_Central"/>
</dbReference>
<dbReference type="GO" id="GO:0070651">
    <property type="term" value="P:nonfunctional rRNA decay"/>
    <property type="evidence" value="ECO:0000266"/>
    <property type="project" value="PomBase"/>
</dbReference>
<dbReference type="GO" id="GO:0071028">
    <property type="term" value="P:nuclear mRNA surveillance"/>
    <property type="evidence" value="ECO:0000318"/>
    <property type="project" value="GO_Central"/>
</dbReference>
<dbReference type="GO" id="GO:0071042">
    <property type="term" value="P:nuclear polyadenylation-dependent mRNA catabolic process"/>
    <property type="evidence" value="ECO:0000266"/>
    <property type="project" value="PomBase"/>
</dbReference>
<dbReference type="GO" id="GO:0071035">
    <property type="term" value="P:nuclear polyadenylation-dependent rRNA catabolic process"/>
    <property type="evidence" value="ECO:0000318"/>
    <property type="project" value="GO_Central"/>
</dbReference>
<dbReference type="GO" id="GO:0070478">
    <property type="term" value="P:nuclear-transcribed mRNA catabolic process, 3'-5' exonucleolytic nonsense-mediated decay"/>
    <property type="evidence" value="ECO:0000266"/>
    <property type="project" value="PomBase"/>
</dbReference>
<dbReference type="GO" id="GO:0070481">
    <property type="term" value="P:nuclear-transcribed mRNA catabolic process, non-stop decay"/>
    <property type="evidence" value="ECO:0000266"/>
    <property type="project" value="PomBase"/>
</dbReference>
<dbReference type="GO" id="GO:0016075">
    <property type="term" value="P:rRNA catabolic process"/>
    <property type="evidence" value="ECO:0000318"/>
    <property type="project" value="GO_Central"/>
</dbReference>
<dbReference type="GO" id="GO:0071038">
    <property type="term" value="P:TRAMP-dependent tRNA surveillance pathway"/>
    <property type="evidence" value="ECO:0000318"/>
    <property type="project" value="GO_Central"/>
</dbReference>
<dbReference type="GO" id="GO:0034473">
    <property type="term" value="P:U1 snRNA 3'-end processing"/>
    <property type="evidence" value="ECO:0000318"/>
    <property type="project" value="GO_Central"/>
</dbReference>
<dbReference type="GO" id="GO:0034475">
    <property type="term" value="P:U4 snRNA 3'-end processing"/>
    <property type="evidence" value="ECO:0000318"/>
    <property type="project" value="GO_Central"/>
</dbReference>
<dbReference type="GO" id="GO:0034476">
    <property type="term" value="P:U5 snRNA 3'-end processing"/>
    <property type="evidence" value="ECO:0000318"/>
    <property type="project" value="GO_Central"/>
</dbReference>
<dbReference type="CDD" id="cd11368">
    <property type="entry name" value="RNase_PH_RRP45"/>
    <property type="match status" value="1"/>
</dbReference>
<dbReference type="FunFam" id="3.30.230.70:FF:000005">
    <property type="entry name" value="Exosome complex component RRP45"/>
    <property type="match status" value="1"/>
</dbReference>
<dbReference type="Gene3D" id="3.30.230.70">
    <property type="entry name" value="GHMP Kinase, N-terminal domain"/>
    <property type="match status" value="1"/>
</dbReference>
<dbReference type="InterPro" id="IPR001247">
    <property type="entry name" value="ExoRNase_PH_dom1"/>
</dbReference>
<dbReference type="InterPro" id="IPR015847">
    <property type="entry name" value="ExoRNase_PH_dom2"/>
</dbReference>
<dbReference type="InterPro" id="IPR036345">
    <property type="entry name" value="ExoRNase_PH_dom2_sf"/>
</dbReference>
<dbReference type="InterPro" id="IPR050590">
    <property type="entry name" value="Exosome_comp_Rrp42_subfam"/>
</dbReference>
<dbReference type="InterPro" id="IPR027408">
    <property type="entry name" value="PNPase/RNase_PH_dom_sf"/>
</dbReference>
<dbReference type="InterPro" id="IPR020568">
    <property type="entry name" value="Ribosomal_Su5_D2-typ_SF"/>
</dbReference>
<dbReference type="InterPro" id="IPR033100">
    <property type="entry name" value="Rrp45"/>
</dbReference>
<dbReference type="PANTHER" id="PTHR11097:SF14">
    <property type="entry name" value="EXOSOME COMPLEX COMPONENT RRP45"/>
    <property type="match status" value="1"/>
</dbReference>
<dbReference type="PANTHER" id="PTHR11097">
    <property type="entry name" value="EXOSOME COMPLEX EXONUCLEASE RIBOSOMAL RNA PROCESSING PROTEIN"/>
    <property type="match status" value="1"/>
</dbReference>
<dbReference type="Pfam" id="PF01138">
    <property type="entry name" value="RNase_PH"/>
    <property type="match status" value="1"/>
</dbReference>
<dbReference type="Pfam" id="PF03725">
    <property type="entry name" value="RNase_PH_C"/>
    <property type="match status" value="1"/>
</dbReference>
<dbReference type="SUPFAM" id="SSF55666">
    <property type="entry name" value="Ribonuclease PH domain 2-like"/>
    <property type="match status" value="1"/>
</dbReference>
<dbReference type="SUPFAM" id="SSF54211">
    <property type="entry name" value="Ribosomal protein S5 domain 2-like"/>
    <property type="match status" value="1"/>
</dbReference>
<organism>
    <name type="scientific">Schizosaccharomyces pombe (strain 972 / ATCC 24843)</name>
    <name type="common">Fission yeast</name>
    <dbReference type="NCBI Taxonomy" id="284812"/>
    <lineage>
        <taxon>Eukaryota</taxon>
        <taxon>Fungi</taxon>
        <taxon>Dikarya</taxon>
        <taxon>Ascomycota</taxon>
        <taxon>Taphrinomycotina</taxon>
        <taxon>Schizosaccharomycetes</taxon>
        <taxon>Schizosaccharomycetales</taxon>
        <taxon>Schizosaccharomycetaceae</taxon>
        <taxon>Schizosaccharomyces</taxon>
    </lineage>
</organism>
<protein>
    <recommendedName>
        <fullName>Exosome complex component rrp45</fullName>
    </recommendedName>
    <alternativeName>
        <fullName>Ribosomal RNA-processing protein 45</fullName>
    </alternativeName>
</protein>